<accession>A6W1U2</accession>
<protein>
    <recommendedName>
        <fullName evidence="1">Small ribosomal subunit protein bS16</fullName>
    </recommendedName>
    <alternativeName>
        <fullName evidence="2">30S ribosomal protein S16</fullName>
    </alternativeName>
</protein>
<evidence type="ECO:0000255" key="1">
    <source>
        <dbReference type="HAMAP-Rule" id="MF_00385"/>
    </source>
</evidence>
<evidence type="ECO:0000305" key="2"/>
<proteinExistence type="inferred from homology"/>
<sequence length="82" mass="9423">MVTIRLSRGGSKKRPFYHLNVADSRRARDGRYIERLGFFNPVARGQEERLRIDLDRVNHWVSQGAQLSDRAAQLVKDASKNA</sequence>
<name>RS16_MARMS</name>
<keyword id="KW-0687">Ribonucleoprotein</keyword>
<keyword id="KW-0689">Ribosomal protein</keyword>
<organism>
    <name type="scientific">Marinomonas sp. (strain MWYL1)</name>
    <dbReference type="NCBI Taxonomy" id="400668"/>
    <lineage>
        <taxon>Bacteria</taxon>
        <taxon>Pseudomonadati</taxon>
        <taxon>Pseudomonadota</taxon>
        <taxon>Gammaproteobacteria</taxon>
        <taxon>Oceanospirillales</taxon>
        <taxon>Oceanospirillaceae</taxon>
        <taxon>Marinomonas</taxon>
    </lineage>
</organism>
<reference key="1">
    <citation type="submission" date="2007-06" db="EMBL/GenBank/DDBJ databases">
        <title>Complete sequence of Marinomonas sp. MWYL1.</title>
        <authorList>
            <consortium name="US DOE Joint Genome Institute"/>
            <person name="Copeland A."/>
            <person name="Lucas S."/>
            <person name="Lapidus A."/>
            <person name="Barry K."/>
            <person name="Glavina del Rio T."/>
            <person name="Dalin E."/>
            <person name="Tice H."/>
            <person name="Pitluck S."/>
            <person name="Kiss H."/>
            <person name="Brettin T."/>
            <person name="Bruce D."/>
            <person name="Detter J.C."/>
            <person name="Han C."/>
            <person name="Schmutz J."/>
            <person name="Larimer F."/>
            <person name="Land M."/>
            <person name="Hauser L."/>
            <person name="Kyrpides N."/>
            <person name="Kim E."/>
            <person name="Johnston A.W.B."/>
            <person name="Todd J.D."/>
            <person name="Rogers R."/>
            <person name="Wexler M."/>
            <person name="Bond P.L."/>
            <person name="Li Y."/>
            <person name="Richardson P."/>
        </authorList>
    </citation>
    <scope>NUCLEOTIDE SEQUENCE [LARGE SCALE GENOMIC DNA]</scope>
    <source>
        <strain>MWYL1</strain>
    </source>
</reference>
<comment type="similarity">
    <text evidence="1">Belongs to the bacterial ribosomal protein bS16 family.</text>
</comment>
<dbReference type="EMBL" id="CP000749">
    <property type="protein sequence ID" value="ABR72671.1"/>
    <property type="molecule type" value="Genomic_DNA"/>
</dbReference>
<dbReference type="SMR" id="A6W1U2"/>
<dbReference type="STRING" id="400668.Mmwyl1_3770"/>
<dbReference type="KEGG" id="mmw:Mmwyl1_3770"/>
<dbReference type="eggNOG" id="COG0228">
    <property type="taxonomic scope" value="Bacteria"/>
</dbReference>
<dbReference type="HOGENOM" id="CLU_100590_5_1_6"/>
<dbReference type="OrthoDB" id="9807878at2"/>
<dbReference type="GO" id="GO:0005737">
    <property type="term" value="C:cytoplasm"/>
    <property type="evidence" value="ECO:0007669"/>
    <property type="project" value="UniProtKB-ARBA"/>
</dbReference>
<dbReference type="GO" id="GO:0015935">
    <property type="term" value="C:small ribosomal subunit"/>
    <property type="evidence" value="ECO:0007669"/>
    <property type="project" value="TreeGrafter"/>
</dbReference>
<dbReference type="GO" id="GO:0003735">
    <property type="term" value="F:structural constituent of ribosome"/>
    <property type="evidence" value="ECO:0007669"/>
    <property type="project" value="InterPro"/>
</dbReference>
<dbReference type="GO" id="GO:0006412">
    <property type="term" value="P:translation"/>
    <property type="evidence" value="ECO:0007669"/>
    <property type="project" value="UniProtKB-UniRule"/>
</dbReference>
<dbReference type="FunFam" id="3.30.1320.10:FF:000001">
    <property type="entry name" value="30S ribosomal protein S16"/>
    <property type="match status" value="1"/>
</dbReference>
<dbReference type="Gene3D" id="3.30.1320.10">
    <property type="match status" value="1"/>
</dbReference>
<dbReference type="HAMAP" id="MF_00385">
    <property type="entry name" value="Ribosomal_bS16"/>
    <property type="match status" value="1"/>
</dbReference>
<dbReference type="InterPro" id="IPR000307">
    <property type="entry name" value="Ribosomal_bS16"/>
</dbReference>
<dbReference type="InterPro" id="IPR023803">
    <property type="entry name" value="Ribosomal_bS16_dom_sf"/>
</dbReference>
<dbReference type="NCBIfam" id="TIGR00002">
    <property type="entry name" value="S16"/>
    <property type="match status" value="1"/>
</dbReference>
<dbReference type="PANTHER" id="PTHR12919">
    <property type="entry name" value="30S RIBOSOMAL PROTEIN S16"/>
    <property type="match status" value="1"/>
</dbReference>
<dbReference type="PANTHER" id="PTHR12919:SF20">
    <property type="entry name" value="SMALL RIBOSOMAL SUBUNIT PROTEIN BS16M"/>
    <property type="match status" value="1"/>
</dbReference>
<dbReference type="Pfam" id="PF00886">
    <property type="entry name" value="Ribosomal_S16"/>
    <property type="match status" value="1"/>
</dbReference>
<dbReference type="SUPFAM" id="SSF54565">
    <property type="entry name" value="Ribosomal protein S16"/>
    <property type="match status" value="1"/>
</dbReference>
<gene>
    <name evidence="1" type="primary">rpsP</name>
    <name type="ordered locus">Mmwyl1_3770</name>
</gene>
<feature type="chain" id="PRO_1000080157" description="Small ribosomal subunit protein bS16">
    <location>
        <begin position="1"/>
        <end position="82"/>
    </location>
</feature>